<accession>Q2FG87</accession>
<keyword id="KW-0963">Cytoplasm</keyword>
<keyword id="KW-0671">Queuosine biosynthesis</keyword>
<keyword id="KW-0949">S-adenosyl-L-methionine</keyword>
<keyword id="KW-0808">Transferase</keyword>
<feature type="chain" id="PRO_1000015286" description="S-adenosylmethionine:tRNA ribosyltransferase-isomerase">
    <location>
        <begin position="1"/>
        <end position="341"/>
    </location>
</feature>
<organism>
    <name type="scientific">Staphylococcus aureus (strain USA300)</name>
    <dbReference type="NCBI Taxonomy" id="367830"/>
    <lineage>
        <taxon>Bacteria</taxon>
        <taxon>Bacillati</taxon>
        <taxon>Bacillota</taxon>
        <taxon>Bacilli</taxon>
        <taxon>Bacillales</taxon>
        <taxon>Staphylococcaceae</taxon>
        <taxon>Staphylococcus</taxon>
    </lineage>
</organism>
<comment type="function">
    <text evidence="1">Transfers and isomerizes the ribose moiety from AdoMet to the 7-aminomethyl group of 7-deazaguanine (preQ1-tRNA) to give epoxyqueuosine (oQ-tRNA).</text>
</comment>
<comment type="catalytic activity">
    <reaction evidence="1">
        <text>7-aminomethyl-7-carbaguanosine(34) in tRNA + S-adenosyl-L-methionine = epoxyqueuosine(34) in tRNA + adenine + L-methionine + 2 H(+)</text>
        <dbReference type="Rhea" id="RHEA:32155"/>
        <dbReference type="Rhea" id="RHEA-COMP:10342"/>
        <dbReference type="Rhea" id="RHEA-COMP:18582"/>
        <dbReference type="ChEBI" id="CHEBI:15378"/>
        <dbReference type="ChEBI" id="CHEBI:16708"/>
        <dbReference type="ChEBI" id="CHEBI:57844"/>
        <dbReference type="ChEBI" id="CHEBI:59789"/>
        <dbReference type="ChEBI" id="CHEBI:82833"/>
        <dbReference type="ChEBI" id="CHEBI:194443"/>
        <dbReference type="EC" id="2.4.99.17"/>
    </reaction>
</comment>
<comment type="pathway">
    <text evidence="1">tRNA modification; tRNA-queuosine biosynthesis.</text>
</comment>
<comment type="subunit">
    <text evidence="1">Monomer.</text>
</comment>
<comment type="subcellular location">
    <subcellularLocation>
        <location evidence="1">Cytoplasm</location>
    </subcellularLocation>
</comment>
<comment type="similarity">
    <text evidence="1">Belongs to the QueA family.</text>
</comment>
<reference key="1">
    <citation type="journal article" date="2006" name="Lancet">
        <title>Complete genome sequence of USA300, an epidemic clone of community-acquired meticillin-resistant Staphylococcus aureus.</title>
        <authorList>
            <person name="Diep B.A."/>
            <person name="Gill S.R."/>
            <person name="Chang R.F."/>
            <person name="Phan T.H."/>
            <person name="Chen J.H."/>
            <person name="Davidson M.G."/>
            <person name="Lin F."/>
            <person name="Lin J."/>
            <person name="Carleton H.A."/>
            <person name="Mongodin E.F."/>
            <person name="Sensabaugh G.F."/>
            <person name="Perdreau-Remington F."/>
        </authorList>
    </citation>
    <scope>NUCLEOTIDE SEQUENCE [LARGE SCALE GENOMIC DNA]</scope>
    <source>
        <strain>USA300</strain>
    </source>
</reference>
<protein>
    <recommendedName>
        <fullName evidence="1">S-adenosylmethionine:tRNA ribosyltransferase-isomerase</fullName>
        <ecNumber evidence="1">2.4.99.17</ecNumber>
    </recommendedName>
    <alternativeName>
        <fullName evidence="1">Queuosine biosynthesis protein QueA</fullName>
    </alternativeName>
</protein>
<gene>
    <name evidence="1" type="primary">queA</name>
    <name type="ordered locus">SAUSA300_1596</name>
</gene>
<dbReference type="EC" id="2.4.99.17" evidence="1"/>
<dbReference type="EMBL" id="CP000255">
    <property type="protein sequence ID" value="ABD22922.1"/>
    <property type="molecule type" value="Genomic_DNA"/>
</dbReference>
<dbReference type="RefSeq" id="WP_001019172.1">
    <property type="nucleotide sequence ID" value="NZ_CP027476.1"/>
</dbReference>
<dbReference type="SMR" id="Q2FG87"/>
<dbReference type="KEGG" id="saa:SAUSA300_1596"/>
<dbReference type="HOGENOM" id="CLU_039110_1_0_9"/>
<dbReference type="OMA" id="YSYGDGM"/>
<dbReference type="UniPathway" id="UPA00392"/>
<dbReference type="Proteomes" id="UP000001939">
    <property type="component" value="Chromosome"/>
</dbReference>
<dbReference type="GO" id="GO:0005737">
    <property type="term" value="C:cytoplasm"/>
    <property type="evidence" value="ECO:0007669"/>
    <property type="project" value="UniProtKB-SubCell"/>
</dbReference>
<dbReference type="GO" id="GO:0051075">
    <property type="term" value="F:S-adenosylmethionine:tRNA ribosyltransferase-isomerase activity"/>
    <property type="evidence" value="ECO:0007669"/>
    <property type="project" value="UniProtKB-EC"/>
</dbReference>
<dbReference type="GO" id="GO:0008616">
    <property type="term" value="P:queuosine biosynthetic process"/>
    <property type="evidence" value="ECO:0007669"/>
    <property type="project" value="UniProtKB-UniRule"/>
</dbReference>
<dbReference type="GO" id="GO:0002099">
    <property type="term" value="P:tRNA wobble guanine modification"/>
    <property type="evidence" value="ECO:0007669"/>
    <property type="project" value="TreeGrafter"/>
</dbReference>
<dbReference type="FunFam" id="2.40.10.240:FF:000002">
    <property type="entry name" value="S-adenosylmethionine:tRNA ribosyltransferase-isomerase"/>
    <property type="match status" value="1"/>
</dbReference>
<dbReference type="FunFam" id="3.40.1780.10:FF:000001">
    <property type="entry name" value="S-adenosylmethionine:tRNA ribosyltransferase-isomerase"/>
    <property type="match status" value="1"/>
</dbReference>
<dbReference type="Gene3D" id="2.40.10.240">
    <property type="entry name" value="QueA-like"/>
    <property type="match status" value="1"/>
</dbReference>
<dbReference type="Gene3D" id="3.40.1780.10">
    <property type="entry name" value="QueA-like"/>
    <property type="match status" value="1"/>
</dbReference>
<dbReference type="HAMAP" id="MF_00113">
    <property type="entry name" value="QueA"/>
    <property type="match status" value="1"/>
</dbReference>
<dbReference type="InterPro" id="IPR003699">
    <property type="entry name" value="QueA"/>
</dbReference>
<dbReference type="InterPro" id="IPR042118">
    <property type="entry name" value="QueA_dom1"/>
</dbReference>
<dbReference type="InterPro" id="IPR042119">
    <property type="entry name" value="QueA_dom2"/>
</dbReference>
<dbReference type="InterPro" id="IPR036100">
    <property type="entry name" value="QueA_sf"/>
</dbReference>
<dbReference type="NCBIfam" id="NF001140">
    <property type="entry name" value="PRK00147.1"/>
    <property type="match status" value="1"/>
</dbReference>
<dbReference type="NCBIfam" id="TIGR00113">
    <property type="entry name" value="queA"/>
    <property type="match status" value="1"/>
</dbReference>
<dbReference type="PANTHER" id="PTHR30307">
    <property type="entry name" value="S-ADENOSYLMETHIONINE:TRNA RIBOSYLTRANSFERASE-ISOMERASE"/>
    <property type="match status" value="1"/>
</dbReference>
<dbReference type="PANTHER" id="PTHR30307:SF0">
    <property type="entry name" value="S-ADENOSYLMETHIONINE:TRNA RIBOSYLTRANSFERASE-ISOMERASE"/>
    <property type="match status" value="1"/>
</dbReference>
<dbReference type="Pfam" id="PF02547">
    <property type="entry name" value="Queuosine_synth"/>
    <property type="match status" value="1"/>
</dbReference>
<dbReference type="SUPFAM" id="SSF111337">
    <property type="entry name" value="QueA-like"/>
    <property type="match status" value="1"/>
</dbReference>
<name>QUEA_STAA3</name>
<sequence length="341" mass="38969">MNIEEFDYDLPESLIAQTPLKDRDHSRLLVMDRETGEMKHLHFKDIIEYFRPGDTLVLNDTRVMPARLFGLKEETGAKVEMLMLTQIEGNDWEVLLKPAKRIKVGNKLNFGNGKIIAECIKEMDQGGRIMRLHYEGILQERLDELGEMPLPPYIKERLDDPDRYQTVYAKESGSAAAPTAGLHFTDELLIEIKNKGVNIAFVTLHVGLGTFRPVSVDDVNDHEMHSEYYQMTQETADLLNDTKSKGHRIISVGTTSTRTLETIRRDHDKFVETSGWTNIFIYPGFDFKAIDGQITNFHLPKSTLVMLVSAFSSRENVLNAYKTAVNLEYRFFSFGDAMLII</sequence>
<evidence type="ECO:0000255" key="1">
    <source>
        <dbReference type="HAMAP-Rule" id="MF_00113"/>
    </source>
</evidence>
<proteinExistence type="inferred from homology"/>